<evidence type="ECO:0000250" key="1"/>
<evidence type="ECO:0000255" key="2"/>
<evidence type="ECO:0000256" key="3">
    <source>
        <dbReference type="SAM" id="MobiDB-lite"/>
    </source>
</evidence>
<evidence type="ECO:0000269" key="4">
    <source>
    </source>
</evidence>
<evidence type="ECO:0000269" key="5">
    <source>
    </source>
</evidence>
<evidence type="ECO:0000269" key="6">
    <source>
    </source>
</evidence>
<evidence type="ECO:0000269" key="7">
    <source>
    </source>
</evidence>
<evidence type="ECO:0000269" key="8">
    <source>
    </source>
</evidence>
<evidence type="ECO:0000303" key="9">
    <source>
    </source>
</evidence>
<evidence type="ECO:0000303" key="10">
    <source>
    </source>
</evidence>
<evidence type="ECO:0000303" key="11">
    <source>
    </source>
</evidence>
<evidence type="ECO:0000305" key="12"/>
<evidence type="ECO:0000305" key="13">
    <source>
    </source>
</evidence>
<evidence type="ECO:0000312" key="14">
    <source>
        <dbReference type="Araport" id="AT5G40870"/>
    </source>
</evidence>
<evidence type="ECO:0000312" key="15">
    <source>
        <dbReference type="EMBL" id="BAB11349.1"/>
    </source>
</evidence>
<sequence>MPEDSSSLDYAMEKASGPHFSGLRFDGLLSSSPPNSSVVSSLRSAVSSSSPSSSDPEAPKQPFIIGVSGGTASGKTTVCDMIIQQLHDHRVVLVNQDSFYRGLTSEELQRVQEYNFDHPDAFDTEQLLHCAETLKSGQPYQVPIYDFKTHQRRSDTFRQVNASDVIILEGILVFHDSRVRNLMNMKIFVDTDADVRLARRIRRDTVERGRDVNSVLEQYAKFVKPAFDDFVLPSKKYADVIIPRGGDNHVAVDLITQHIHTKLGQHDLCKIYPNVYVIQSTFQIRGMHTLIREKDISKHDFVFYSDRLIRLVVEHGLGHLPFTEKQVVTPTGAVYTGVDFCKKLCGVSIIRSGESMENALRACCKGIKIGKILIHRDGDNGKQLIYEKLPHDISERHVLLLDPVLATGNSANQAIELLIQKGVPEAHIIFLNLISAPEGIHCVCKRFPALKIVTSEIDQCLNQEFRVIPGLGEFGDRYFGTDEEDQ</sequence>
<name>UKL1_ARATH</name>
<proteinExistence type="evidence at protein level"/>
<reference key="1">
    <citation type="journal article" date="2007" name="Plant Mol. Biol.">
        <title>Functional characterization of a gene encoding a dual domain for uridine kinase and uracil phosphoribosyltransferase in Arabidopsis thaliana.</title>
        <authorList>
            <person name="Islam M.R."/>
            <person name="Kim H."/>
            <person name="Kang S.W."/>
            <person name="Kim J.S."/>
            <person name="Jeong Y.M."/>
            <person name="Hwang H.J."/>
            <person name="Lee S.Y."/>
            <person name="Woo J.C."/>
            <person name="Kim S.G."/>
        </authorList>
    </citation>
    <scope>NUCLEOTIDE SEQUENCE [MRNA]</scope>
    <scope>FUNCTION</scope>
    <scope>SUBCELLULAR LOCATION</scope>
    <scope>TISSUE SPECIFICITY</scope>
    <scope>DISRUPTION PHENOTYPE</scope>
</reference>
<reference key="2">
    <citation type="journal article" date="1998" name="DNA Res.">
        <title>Structural analysis of Arabidopsis thaliana chromosome 5. V. Sequence features of the regions of 1,381,565 bp covered by twenty one physically assigned P1 and TAC clones.</title>
        <authorList>
            <person name="Kaneko T."/>
            <person name="Kotani H."/>
            <person name="Nakamura Y."/>
            <person name="Sato S."/>
            <person name="Asamizu E."/>
            <person name="Miyajima N."/>
            <person name="Tabata S."/>
        </authorList>
    </citation>
    <scope>NUCLEOTIDE SEQUENCE [LARGE SCALE GENOMIC DNA]</scope>
    <source>
        <strain>cv. Columbia</strain>
    </source>
</reference>
<reference key="3">
    <citation type="journal article" date="2017" name="Plant J.">
        <title>Araport11: a complete reannotation of the Arabidopsis thaliana reference genome.</title>
        <authorList>
            <person name="Cheng C.Y."/>
            <person name="Krishnakumar V."/>
            <person name="Chan A.P."/>
            <person name="Thibaud-Nissen F."/>
            <person name="Schobel S."/>
            <person name="Town C.D."/>
        </authorList>
    </citation>
    <scope>GENOME REANNOTATION</scope>
    <source>
        <strain>cv. Columbia</strain>
    </source>
</reference>
<reference key="4">
    <citation type="journal article" date="2003" name="Science">
        <title>Empirical analysis of transcriptional activity in the Arabidopsis genome.</title>
        <authorList>
            <person name="Yamada K."/>
            <person name="Lim J."/>
            <person name="Dale J.M."/>
            <person name="Chen H."/>
            <person name="Shinn P."/>
            <person name="Palm C.J."/>
            <person name="Southwick A.M."/>
            <person name="Wu H.C."/>
            <person name="Kim C.J."/>
            <person name="Nguyen M."/>
            <person name="Pham P.K."/>
            <person name="Cheuk R.F."/>
            <person name="Karlin-Newmann G."/>
            <person name="Liu S.X."/>
            <person name="Lam B."/>
            <person name="Sakano H."/>
            <person name="Wu T."/>
            <person name="Yu G."/>
            <person name="Miranda M."/>
            <person name="Quach H.L."/>
            <person name="Tripp M."/>
            <person name="Chang C.H."/>
            <person name="Lee J.M."/>
            <person name="Toriumi M.J."/>
            <person name="Chan M.M."/>
            <person name="Tang C.C."/>
            <person name="Onodera C.S."/>
            <person name="Deng J.M."/>
            <person name="Akiyama K."/>
            <person name="Ansari Y."/>
            <person name="Arakawa T."/>
            <person name="Banh J."/>
            <person name="Banno F."/>
            <person name="Bowser L."/>
            <person name="Brooks S.Y."/>
            <person name="Carninci P."/>
            <person name="Chao Q."/>
            <person name="Choy N."/>
            <person name="Enju A."/>
            <person name="Goldsmith A.D."/>
            <person name="Gurjal M."/>
            <person name="Hansen N.F."/>
            <person name="Hayashizaki Y."/>
            <person name="Johnson-Hopson C."/>
            <person name="Hsuan V.W."/>
            <person name="Iida K."/>
            <person name="Karnes M."/>
            <person name="Khan S."/>
            <person name="Koesema E."/>
            <person name="Ishida J."/>
            <person name="Jiang P.X."/>
            <person name="Jones T."/>
            <person name="Kawai J."/>
            <person name="Kamiya A."/>
            <person name="Meyers C."/>
            <person name="Nakajima M."/>
            <person name="Narusaka M."/>
            <person name="Seki M."/>
            <person name="Sakurai T."/>
            <person name="Satou M."/>
            <person name="Tamse R."/>
            <person name="Vaysberg M."/>
            <person name="Wallender E.K."/>
            <person name="Wong C."/>
            <person name="Yamamura Y."/>
            <person name="Yuan S."/>
            <person name="Shinozaki K."/>
            <person name="Davis R.W."/>
            <person name="Theologis A."/>
            <person name="Ecker J.R."/>
        </authorList>
    </citation>
    <scope>NUCLEOTIDE SEQUENCE [LARGE SCALE MRNA]</scope>
    <source>
        <strain>cv. Columbia</strain>
    </source>
</reference>
<reference key="5">
    <citation type="journal article" date="2009" name="Plant J.">
        <title>Uracil salvage is necessary for early Arabidopsis development.</title>
        <authorList>
            <person name="Mainguet S.E."/>
            <person name="Gakiere B."/>
            <person name="Majira A."/>
            <person name="Pelletier S."/>
            <person name="Bringel F."/>
            <person name="Guerard F."/>
            <person name="Caboche M."/>
            <person name="Berthome R."/>
            <person name="Renou J.P."/>
        </authorList>
    </citation>
    <scope>FUNCTION</scope>
    <scope>DISRUPTION PHENOTYPE</scope>
    <scope>GENE FAMILY</scope>
    <scope>NOMENCLATURE</scope>
</reference>
<reference key="6">
    <citation type="journal article" date="2009" name="Plant Physiol.">
        <title>Large-scale Arabidopsis phosphoproteome profiling reveals novel chloroplast kinase substrates and phosphorylation networks.</title>
        <authorList>
            <person name="Reiland S."/>
            <person name="Messerli G."/>
            <person name="Baerenfaller K."/>
            <person name="Gerrits B."/>
            <person name="Endler A."/>
            <person name="Grossmann J."/>
            <person name="Gruissem W."/>
            <person name="Baginsky S."/>
        </authorList>
    </citation>
    <scope>IDENTIFICATION BY MASS SPECTROMETRY [LARGE SCALE ANALYSIS]</scope>
</reference>
<reference key="7">
    <citation type="journal article" date="2011" name="Plant Cell">
        <title>Plastid uridine salvage activity is required for photoassimilate allocation and partitioning in Arabidopsis.</title>
        <authorList>
            <person name="Chen M."/>
            <person name="Thelen J.J."/>
        </authorList>
    </citation>
    <scope>FUNCTION</scope>
    <scope>CATALYTIC ACTIVITY</scope>
    <scope>BIOPHYSICOCHEMICAL PROPERTIES</scope>
    <scope>SUBCELLULAR LOCATION</scope>
    <scope>DISRUPTION PHENOTYPE</scope>
</reference>
<reference key="8">
    <citation type="journal article" date="2019" name="Plant Physiol.">
        <title>Pyrimidine salvage: physiological functions and interaction with chloroplast biogenesis.</title>
        <authorList>
            <person name="Ohler L."/>
            <person name="Niopek-Witz S."/>
            <person name="Mainguet S.E."/>
            <person name="Moehlmann T."/>
        </authorList>
    </citation>
    <scope>FUNCTION</scope>
    <scope>CATALYTIC ACTIVITY</scope>
    <scope>BIOPHYSICOCHEMICAL PROPERTIES</scope>
</reference>
<reference key="9">
    <citation type="journal article" date="2020" name="Plant Cell">
        <title>A kinase and a glycosylase catabolize pseudouridine in the peroxisome to prevent toxic pseudouridine monophosphate accumulation.</title>
        <authorList>
            <person name="Chen M."/>
            <person name="Witte C.P."/>
        </authorList>
    </citation>
    <scope>FUNCTION</scope>
    <scope>CATALYTIC ACTIVITY</scope>
</reference>
<organism>
    <name type="scientific">Arabidopsis thaliana</name>
    <name type="common">Mouse-ear cress</name>
    <dbReference type="NCBI Taxonomy" id="3702"/>
    <lineage>
        <taxon>Eukaryota</taxon>
        <taxon>Viridiplantae</taxon>
        <taxon>Streptophyta</taxon>
        <taxon>Embryophyta</taxon>
        <taxon>Tracheophyta</taxon>
        <taxon>Spermatophyta</taxon>
        <taxon>Magnoliopsida</taxon>
        <taxon>eudicotyledons</taxon>
        <taxon>Gunneridae</taxon>
        <taxon>Pentapetalae</taxon>
        <taxon>rosids</taxon>
        <taxon>malvids</taxon>
        <taxon>Brassicales</taxon>
        <taxon>Brassicaceae</taxon>
        <taxon>Camelineae</taxon>
        <taxon>Arabidopsis</taxon>
    </lineage>
</organism>
<feature type="transit peptide" description="Chloroplast" evidence="2">
    <location>
        <begin position="1"/>
        <end position="47"/>
    </location>
</feature>
<feature type="chain" id="PRO_0000394514" description="Uridine/cytidine kinase UKL1, chloroplastic">
    <location>
        <begin position="48"/>
        <end position="486"/>
    </location>
</feature>
<feature type="region of interest" description="Disordered" evidence="3">
    <location>
        <begin position="31"/>
        <end position="67"/>
    </location>
</feature>
<feature type="region of interest" description="Uridine kinase">
    <location>
        <begin position="59"/>
        <end position="264"/>
    </location>
</feature>
<feature type="region of interest" description="Uracil phosphoribosyltransferase">
    <location>
        <begin position="274"/>
        <end position="486"/>
    </location>
</feature>
<feature type="compositionally biased region" description="Low complexity" evidence="3">
    <location>
        <begin position="31"/>
        <end position="54"/>
    </location>
</feature>
<feature type="binding site" evidence="1">
    <location>
        <position position="298"/>
    </location>
    <ligand>
        <name>GTP</name>
        <dbReference type="ChEBI" id="CHEBI:37565"/>
    </ligand>
</feature>
<feature type="binding site" evidence="1">
    <location>
        <position position="307"/>
    </location>
    <ligand>
        <name>GTP</name>
        <dbReference type="ChEBI" id="CHEBI:37565"/>
    </ligand>
</feature>
<feature type="binding site" evidence="1">
    <location>
        <begin position="341"/>
        <end position="344"/>
    </location>
    <ligand>
        <name>GTP</name>
        <dbReference type="ChEBI" id="CHEBI:37565"/>
    </ligand>
</feature>
<feature type="binding site" evidence="1">
    <location>
        <position position="351"/>
    </location>
    <ligand>
        <name>5-phospho-alpha-D-ribose 1-diphosphate</name>
        <dbReference type="ChEBI" id="CHEBI:58017"/>
    </ligand>
</feature>
<feature type="binding site" evidence="1">
    <location>
        <position position="376"/>
    </location>
    <ligand>
        <name>5-phospho-alpha-D-ribose 1-diphosphate</name>
        <dbReference type="ChEBI" id="CHEBI:58017"/>
    </ligand>
</feature>
<feature type="binding site" evidence="1">
    <location>
        <position position="396"/>
    </location>
    <ligand>
        <name>GTP</name>
        <dbReference type="ChEBI" id="CHEBI:37565"/>
    </ligand>
</feature>
<feature type="binding site" evidence="1">
    <location>
        <position position="402"/>
    </location>
    <ligand>
        <name>5-phospho-alpha-D-ribose 1-diphosphate</name>
        <dbReference type="ChEBI" id="CHEBI:58017"/>
    </ligand>
</feature>
<feature type="binding site" evidence="1">
    <location>
        <begin position="407"/>
        <end position="410"/>
    </location>
    <ligand>
        <name>5-phospho-alpha-D-ribose 1-diphosphate</name>
        <dbReference type="ChEBI" id="CHEBI:58017"/>
    </ligand>
</feature>
<feature type="binding site" evidence="1">
    <location>
        <begin position="472"/>
        <end position="474"/>
    </location>
    <ligand>
        <name>uracil</name>
        <dbReference type="ChEBI" id="CHEBI:17568"/>
    </ligand>
</feature>
<feature type="binding site" evidence="1">
    <location>
        <position position="473"/>
    </location>
    <ligand>
        <name>5-phospho-alpha-D-ribose 1-diphosphate</name>
        <dbReference type="ChEBI" id="CHEBI:58017"/>
    </ligand>
</feature>
<comment type="function">
    <text evidence="5 6 7 8 13">Involved in the pyrimidine salvage pathway (Probable) (PubMed:21828290, PubMed:31101721, PubMed:31907295). Phosphorylates uridine to uridine monophosphate (UMP) (PubMed:21828290, PubMed:31101721, PubMed:31907295). Phosphorylates cytidine to cytidine monophosphate (CMP) (PubMed:31101721). Does not possess uracil phosphoribosyltransferase (UPRTase) activity that catalyzes the conversion of uracil and 5-phospho-alpha-D-ribose 1-diphosphate (PRPP) to UMP and diphosphate (PubMed:19563437, PubMed:21828290, PubMed:31101721).</text>
</comment>
<comment type="catalytic activity">
    <reaction evidence="7">
        <text>cytidine + ATP = CMP + ADP + H(+)</text>
        <dbReference type="Rhea" id="RHEA:24674"/>
        <dbReference type="ChEBI" id="CHEBI:15378"/>
        <dbReference type="ChEBI" id="CHEBI:17562"/>
        <dbReference type="ChEBI" id="CHEBI:30616"/>
        <dbReference type="ChEBI" id="CHEBI:60377"/>
        <dbReference type="ChEBI" id="CHEBI:456216"/>
        <dbReference type="EC" id="2.7.1.48"/>
    </reaction>
    <physiologicalReaction direction="left-to-right" evidence="7">
        <dbReference type="Rhea" id="RHEA:24675"/>
    </physiologicalReaction>
</comment>
<comment type="catalytic activity">
    <reaction evidence="6 7 8">
        <text>uridine + ATP = UMP + ADP + H(+)</text>
        <dbReference type="Rhea" id="RHEA:16825"/>
        <dbReference type="ChEBI" id="CHEBI:15378"/>
        <dbReference type="ChEBI" id="CHEBI:16704"/>
        <dbReference type="ChEBI" id="CHEBI:30616"/>
        <dbReference type="ChEBI" id="CHEBI:57865"/>
        <dbReference type="ChEBI" id="CHEBI:456216"/>
        <dbReference type="EC" id="2.7.1.48"/>
    </reaction>
    <physiologicalReaction direction="left-to-right" evidence="6 7 8">
        <dbReference type="Rhea" id="RHEA:16826"/>
    </physiologicalReaction>
</comment>
<comment type="biophysicochemical properties">
    <kinetics>
        <KM evidence="7">0.33 uM for cytidine</KM>
        <KM evidence="6">0.34 uM for uridine</KM>
        <Vmax evidence="7">4.66 umol/h/mg enzyme with cytidine as substrate</Vmax>
        <Vmax evidence="6">14.8 umol/h/mg enzyme with uridine as substrate</Vmax>
    </kinetics>
</comment>
<comment type="pathway">
    <text evidence="12">Pyrimidine metabolism; CTP biosynthesis via salvage pathway; CTP from cytidine: step 1/3.</text>
</comment>
<comment type="pathway">
    <text evidence="12">Pyrimidine metabolism; UMP biosynthesis via salvage pathway; UMP from uridine: step 1/1.</text>
</comment>
<comment type="subcellular location">
    <subcellularLocation>
        <location evidence="6">Plastid</location>
        <location evidence="6">Chloroplast</location>
    </subcellularLocation>
    <subcellularLocation>
        <location evidence="4">Cytoplasm</location>
    </subcellularLocation>
    <text evidence="4">Aggregates in granular precipitates restricted to the cytoplasm, when expressed in transfected cells.</text>
</comment>
<comment type="tissue specificity">
    <text evidence="4">Expressed in roots, leaves and stems.</text>
</comment>
<comment type="disruption phenotype">
    <text evidence="4 5 6">No visible phenotype under normal growth conditions (PubMed:17143579, PubMed:19563437). No decrease in uracil phosphoribosyltransferase activity (PubMed:17143579, PubMed:19563437). Loss of sensitivity to 5'-fluorouracil and 5'-fluorouridine (PubMed:17143579, PubMed:21828290).</text>
</comment>
<comment type="similarity">
    <text evidence="12">In the N-terminal section; belongs to the uridine kinase family.</text>
</comment>
<comment type="similarity">
    <text evidence="12">In the C-terminal section; belongs to the UPRTase family.</text>
</comment>
<comment type="caution">
    <text evidence="4 5 6">Was prevsiouly characterized as an enzyme that possesses uracil phosphoribosyltransferase (UPRT) activity (PubMed:17143579). Further publications show a lack of such activity (PubMed:19563437, PubMed:21828290).</text>
</comment>
<protein>
    <recommendedName>
        <fullName evidence="12">Uridine/cytidine kinase UKL1, chloroplastic</fullName>
        <ecNumber evidence="6 7 8">2.7.1.48</ecNumber>
    </recommendedName>
    <alternativeName>
        <fullName evidence="12">AtUK</fullName>
    </alternativeName>
    <alternativeName>
        <fullName evidence="10">Uridine kinase-like protein 1</fullName>
    </alternativeName>
    <alternativeName>
        <fullName evidence="11">Uridine/cytidine kinase 1</fullName>
    </alternativeName>
</protein>
<accession>Q9FKS0</accession>
<accession>Q8RXX1</accession>
<keyword id="KW-0021">Allosteric enzyme</keyword>
<keyword id="KW-0150">Chloroplast</keyword>
<keyword id="KW-0963">Cytoplasm</keyword>
<keyword id="KW-0328">Glycosyltransferase</keyword>
<keyword id="KW-0342">GTP-binding</keyword>
<keyword id="KW-0418">Kinase</keyword>
<keyword id="KW-0511">Multifunctional enzyme</keyword>
<keyword id="KW-0547">Nucleotide-binding</keyword>
<keyword id="KW-0934">Plastid</keyword>
<keyword id="KW-1185">Reference proteome</keyword>
<keyword id="KW-0808">Transferase</keyword>
<keyword id="KW-0809">Transit peptide</keyword>
<dbReference type="EC" id="2.7.1.48" evidence="6 7 8"/>
<dbReference type="EMBL" id="AB011477">
    <property type="protein sequence ID" value="BAB11349.1"/>
    <property type="molecule type" value="Genomic_DNA"/>
</dbReference>
<dbReference type="EMBL" id="CP002688">
    <property type="protein sequence ID" value="AED94610.1"/>
    <property type="molecule type" value="Genomic_DNA"/>
</dbReference>
<dbReference type="EMBL" id="AY080631">
    <property type="protein sequence ID" value="AAL85977.1"/>
    <property type="molecule type" value="mRNA"/>
</dbReference>
<dbReference type="EMBL" id="AY089970">
    <property type="protein sequence ID" value="AAM10488.1"/>
    <property type="molecule type" value="mRNA"/>
</dbReference>
<dbReference type="EMBL" id="BT002336">
    <property type="protein sequence ID" value="AAN86169.1"/>
    <property type="molecule type" value="mRNA"/>
</dbReference>
<dbReference type="RefSeq" id="NP_198903.1">
    <property type="nucleotide sequence ID" value="NM_123452.5"/>
</dbReference>
<dbReference type="SMR" id="Q9FKS0"/>
<dbReference type="BioGRID" id="19339">
    <property type="interactions" value="3"/>
</dbReference>
<dbReference type="FunCoup" id="Q9FKS0">
    <property type="interactions" value="4030"/>
</dbReference>
<dbReference type="IntAct" id="Q9FKS0">
    <property type="interactions" value="1"/>
</dbReference>
<dbReference type="STRING" id="3702.Q9FKS0"/>
<dbReference type="iPTMnet" id="Q9FKS0"/>
<dbReference type="PaxDb" id="3702-AT5G40870.1"/>
<dbReference type="ProteomicsDB" id="245303"/>
<dbReference type="EnsemblPlants" id="AT5G40870.1">
    <property type="protein sequence ID" value="AT5G40870.1"/>
    <property type="gene ID" value="AT5G40870"/>
</dbReference>
<dbReference type="GeneID" id="834088"/>
<dbReference type="Gramene" id="AT5G40870.1">
    <property type="protein sequence ID" value="AT5G40870.1"/>
    <property type="gene ID" value="AT5G40870"/>
</dbReference>
<dbReference type="KEGG" id="ath:AT5G40870"/>
<dbReference type="Araport" id="AT5G40870"/>
<dbReference type="TAIR" id="AT5G40870">
    <property type="gene designation" value="UK/UPRT1"/>
</dbReference>
<dbReference type="eggNOG" id="KOG4203">
    <property type="taxonomic scope" value="Eukaryota"/>
</dbReference>
<dbReference type="HOGENOM" id="CLU_021278_0_3_1"/>
<dbReference type="InParanoid" id="Q9FKS0"/>
<dbReference type="OMA" id="EPQLHCE"/>
<dbReference type="OrthoDB" id="106623at2759"/>
<dbReference type="PhylomeDB" id="Q9FKS0"/>
<dbReference type="BioCyc" id="ARA:AT5G40870-MONOMER"/>
<dbReference type="BRENDA" id="2.4.2.9">
    <property type="organism ID" value="399"/>
</dbReference>
<dbReference type="BRENDA" id="2.7.1.48">
    <property type="organism ID" value="399"/>
</dbReference>
<dbReference type="SABIO-RK" id="Q9FKS0"/>
<dbReference type="UniPathway" id="UPA00574">
    <property type="reaction ID" value="UER00637"/>
</dbReference>
<dbReference type="UniPathway" id="UPA00579">
    <property type="reaction ID" value="UER00640"/>
</dbReference>
<dbReference type="PRO" id="PR:Q9FKS0"/>
<dbReference type="Proteomes" id="UP000006548">
    <property type="component" value="Chromosome 5"/>
</dbReference>
<dbReference type="ExpressionAtlas" id="Q9FKS0">
    <property type="expression patterns" value="baseline and differential"/>
</dbReference>
<dbReference type="GO" id="GO:0009507">
    <property type="term" value="C:chloroplast"/>
    <property type="evidence" value="ECO:0000314"/>
    <property type="project" value="TAIR"/>
</dbReference>
<dbReference type="GO" id="GO:0005737">
    <property type="term" value="C:cytoplasm"/>
    <property type="evidence" value="ECO:0000314"/>
    <property type="project" value="TAIR"/>
</dbReference>
<dbReference type="GO" id="GO:0005524">
    <property type="term" value="F:ATP binding"/>
    <property type="evidence" value="ECO:0007669"/>
    <property type="project" value="InterPro"/>
</dbReference>
<dbReference type="GO" id="GO:0043771">
    <property type="term" value="F:cytidine kinase activity"/>
    <property type="evidence" value="ECO:0007669"/>
    <property type="project" value="RHEA"/>
</dbReference>
<dbReference type="GO" id="GO:0016757">
    <property type="term" value="F:glycosyltransferase activity"/>
    <property type="evidence" value="ECO:0007669"/>
    <property type="project" value="UniProtKB-KW"/>
</dbReference>
<dbReference type="GO" id="GO:0005525">
    <property type="term" value="F:GTP binding"/>
    <property type="evidence" value="ECO:0007669"/>
    <property type="project" value="UniProtKB-KW"/>
</dbReference>
<dbReference type="GO" id="GO:0004849">
    <property type="term" value="F:uridine kinase activity"/>
    <property type="evidence" value="ECO:0000314"/>
    <property type="project" value="TAIR"/>
</dbReference>
<dbReference type="GO" id="GO:0044211">
    <property type="term" value="P:CTP salvage"/>
    <property type="evidence" value="ECO:0007669"/>
    <property type="project" value="UniProtKB-UniPathway"/>
</dbReference>
<dbReference type="GO" id="GO:2000904">
    <property type="term" value="P:regulation of starch metabolic process"/>
    <property type="evidence" value="ECO:0000315"/>
    <property type="project" value="TAIR"/>
</dbReference>
<dbReference type="GO" id="GO:0044206">
    <property type="term" value="P:UMP salvage"/>
    <property type="evidence" value="ECO:0000314"/>
    <property type="project" value="TAIR"/>
</dbReference>
<dbReference type="CDD" id="cd06223">
    <property type="entry name" value="PRTases_typeI"/>
    <property type="match status" value="1"/>
</dbReference>
<dbReference type="CDD" id="cd02023">
    <property type="entry name" value="UMPK"/>
    <property type="match status" value="1"/>
</dbReference>
<dbReference type="FunFam" id="3.40.50.2020:FF:000015">
    <property type="entry name" value="Uridine kinase"/>
    <property type="match status" value="1"/>
</dbReference>
<dbReference type="FunFam" id="3.40.50.300:FF:000339">
    <property type="entry name" value="Uridine kinase"/>
    <property type="match status" value="1"/>
</dbReference>
<dbReference type="Gene3D" id="3.40.50.2020">
    <property type="match status" value="1"/>
</dbReference>
<dbReference type="Gene3D" id="3.40.50.300">
    <property type="entry name" value="P-loop containing nucleotide triphosphate hydrolases"/>
    <property type="match status" value="1"/>
</dbReference>
<dbReference type="InterPro" id="IPR027417">
    <property type="entry name" value="P-loop_NTPase"/>
</dbReference>
<dbReference type="InterPro" id="IPR000836">
    <property type="entry name" value="PRibTrfase_dom"/>
</dbReference>
<dbReference type="InterPro" id="IPR006083">
    <property type="entry name" value="PRK/URK"/>
</dbReference>
<dbReference type="InterPro" id="IPR029057">
    <property type="entry name" value="PRTase-like"/>
</dbReference>
<dbReference type="InterPro" id="IPR000764">
    <property type="entry name" value="Uridine_kinase-like"/>
</dbReference>
<dbReference type="NCBIfam" id="NF001097">
    <property type="entry name" value="PRK00129.1"/>
    <property type="match status" value="1"/>
</dbReference>
<dbReference type="NCBIfam" id="NF004018">
    <property type="entry name" value="PRK05480.1"/>
    <property type="match status" value="1"/>
</dbReference>
<dbReference type="NCBIfam" id="TIGR00235">
    <property type="entry name" value="udk"/>
    <property type="match status" value="1"/>
</dbReference>
<dbReference type="PANTHER" id="PTHR10285">
    <property type="entry name" value="URIDINE KINASE"/>
    <property type="match status" value="1"/>
</dbReference>
<dbReference type="Pfam" id="PF00485">
    <property type="entry name" value="PRK"/>
    <property type="match status" value="1"/>
</dbReference>
<dbReference type="Pfam" id="PF14681">
    <property type="entry name" value="UPRTase"/>
    <property type="match status" value="1"/>
</dbReference>
<dbReference type="PRINTS" id="PR00988">
    <property type="entry name" value="URIDINKINASE"/>
</dbReference>
<dbReference type="SUPFAM" id="SSF52540">
    <property type="entry name" value="P-loop containing nucleoside triphosphate hydrolases"/>
    <property type="match status" value="1"/>
</dbReference>
<dbReference type="SUPFAM" id="SSF53271">
    <property type="entry name" value="PRTase-like"/>
    <property type="match status" value="1"/>
</dbReference>
<gene>
    <name evidence="10" type="primary">UKL1</name>
    <name evidence="11" type="synonym">UCK1</name>
    <name evidence="9" type="synonym">UK</name>
    <name evidence="9" type="synonym">UPRT1</name>
    <name evidence="14" type="ordered locus">At5g40870</name>
    <name evidence="15" type="ORF">MHK7.10</name>
</gene>